<sequence length="214" mass="23413">MLELRMKQANNCALIVVDVQNGFTPGGNLAVAGADQIIPCINQLGTCFDTIVITQDWHPHNHISFASNHLGKQPFDTIQLPYGPQVLWPSHCVQGTQDAELHPALDLPTAQLIIRKGFHRNIDSYSAFMEADRHTSTGLAGYLKERGIDTVYIVGIATDFCVAWTAIDASKAGLNSYVIIDACKAIDMNGSLQHAWQEMLASGVQRISSRNILV</sequence>
<gene>
    <name evidence="4" type="primary">pncA</name>
    <name evidence="6" type="ordered locus">ACIAD3584</name>
</gene>
<reference key="1">
    <citation type="journal article" date="2004" name="Nucleic Acids Res.">
        <title>Unique features revealed by the genome sequence of Acinetobacter sp. ADP1, a versatile and naturally transformation competent bacterium.</title>
        <authorList>
            <person name="Barbe V."/>
            <person name="Vallenet D."/>
            <person name="Fonknechten N."/>
            <person name="Kreimeyer A."/>
            <person name="Oztas S."/>
            <person name="Labarre L."/>
            <person name="Cruveiller S."/>
            <person name="Robert C."/>
            <person name="Duprat S."/>
            <person name="Wincker P."/>
            <person name="Ornston L.N."/>
            <person name="Weissenbach J."/>
            <person name="Marliere P."/>
            <person name="Cohen G.N."/>
            <person name="Medigue C."/>
        </authorList>
    </citation>
    <scope>NUCLEOTIDE SEQUENCE [LARGE SCALE GENOMIC DNA]</scope>
    <source>
        <strain>ATCC 33305 / BD413 / ADP1</strain>
    </source>
</reference>
<reference key="2">
    <citation type="journal article" date="2010" name="J. Biol. Chem.">
        <title>Genomics-driven reconstruction of acinetobacter NAD metabolism: insights for antibacterial target selection.</title>
        <authorList>
            <person name="Sorci L."/>
            <person name="Blaby I."/>
            <person name="De Ingeniis J."/>
            <person name="Gerdes S."/>
            <person name="Raffaelli N."/>
            <person name="de Crecy Lagard V."/>
            <person name="Osterman A."/>
        </authorList>
    </citation>
    <scope>FUNCTION</scope>
    <scope>CATALYTIC ACTIVITY</scope>
    <scope>BIOPHYSICOCHEMICAL PROPERTIES</scope>
    <scope>PATHWAY</scope>
    <scope>DISRUPTION PHENOTYPE</scope>
    <source>
        <strain>ATCC 33305 / BD413 / ADP1</strain>
    </source>
</reference>
<proteinExistence type="evidence at protein level"/>
<accession>Q6F6U3</accession>
<feature type="chain" id="PRO_0000457822" description="Nicotinamidase">
    <location>
        <begin position="1"/>
        <end position="214"/>
    </location>
</feature>
<feature type="active site" description="Proton acceptor" evidence="1">
    <location>
        <position position="18"/>
    </location>
</feature>
<feature type="active site" evidence="1">
    <location>
        <position position="116"/>
    </location>
</feature>
<feature type="active site" description="Nucleophile" evidence="1">
    <location>
        <position position="161"/>
    </location>
</feature>
<feature type="binding site" evidence="1">
    <location>
        <position position="56"/>
    </location>
    <ligand>
        <name>a divalent metal cation</name>
        <dbReference type="ChEBI" id="CHEBI:60240"/>
    </ligand>
</feature>
<feature type="binding site" evidence="1">
    <location>
        <position position="58"/>
    </location>
    <ligand>
        <name>a divalent metal cation</name>
        <dbReference type="ChEBI" id="CHEBI:60240"/>
    </ligand>
</feature>
<feature type="binding site" evidence="1">
    <location>
        <position position="62"/>
    </location>
    <ligand>
        <name>a divalent metal cation</name>
        <dbReference type="ChEBI" id="CHEBI:60240"/>
    </ligand>
</feature>
<feature type="binding site" evidence="1">
    <location>
        <position position="91"/>
    </location>
    <ligand>
        <name>a divalent metal cation</name>
        <dbReference type="ChEBI" id="CHEBI:60240"/>
    </ligand>
</feature>
<organism>
    <name type="scientific">Acinetobacter baylyi (strain ATCC 33305 / BD413 / ADP1)</name>
    <dbReference type="NCBI Taxonomy" id="62977"/>
    <lineage>
        <taxon>Bacteria</taxon>
        <taxon>Pseudomonadati</taxon>
        <taxon>Pseudomonadota</taxon>
        <taxon>Gammaproteobacteria</taxon>
        <taxon>Moraxellales</taxon>
        <taxon>Moraxellaceae</taxon>
        <taxon>Acinetobacter</taxon>
    </lineage>
</organism>
<keyword id="KW-0378">Hydrolase</keyword>
<keyword id="KW-0479">Metal-binding</keyword>
<keyword id="KW-0662">Pyridine nucleotide biosynthesis</keyword>
<comment type="function">
    <text evidence="3">Catalyzes the deamidation of nicotinamide (NAM) into nicotinate (Na) (PubMed:20926389). Functions in the deamidating salvage pathway for production of NAD from nicotinamide (PubMed:20926389).</text>
</comment>
<comment type="catalytic activity">
    <reaction evidence="3">
        <text>nicotinamide + H2O = nicotinate + NH4(+)</text>
        <dbReference type="Rhea" id="RHEA:14545"/>
        <dbReference type="ChEBI" id="CHEBI:15377"/>
        <dbReference type="ChEBI" id="CHEBI:17154"/>
        <dbReference type="ChEBI" id="CHEBI:28938"/>
        <dbReference type="ChEBI" id="CHEBI:32544"/>
        <dbReference type="EC" id="3.5.1.19"/>
    </reaction>
    <physiologicalReaction direction="left-to-right" evidence="3">
        <dbReference type="Rhea" id="RHEA:14546"/>
    </physiologicalReaction>
</comment>
<comment type="cofactor">
    <cofactor evidence="1">
        <name>a divalent metal cation</name>
        <dbReference type="ChEBI" id="CHEBI:60240"/>
    </cofactor>
</comment>
<comment type="biophysicochemical properties">
    <kinetics>
        <KM evidence="3">2.5 uM for nicotinamide</KM>
        <text evidence="3">kcat is 0.69 sec(-1).</text>
    </kinetics>
</comment>
<comment type="pathway">
    <text evidence="3">Cofactor biosynthesis; nicotinate biosynthesis; nicotinate from nicotinamide: step 1/1.</text>
</comment>
<comment type="disruption phenotype">
    <text evidence="3">The nadB-pncA double mutant can grow only in a minimal medium supplemented with niacin (nicotinamide or nicotinic acid).</text>
</comment>
<comment type="similarity">
    <text evidence="5">Belongs to the isochorismatase family.</text>
</comment>
<protein>
    <recommendedName>
        <fullName evidence="4">Nicotinamidase</fullName>
        <ecNumber evidence="3">3.5.1.19</ecNumber>
    </recommendedName>
    <alternativeName>
        <fullName evidence="4">Nicotinamide deamidase</fullName>
        <shortName evidence="2">NAMase</shortName>
    </alternativeName>
</protein>
<name>PNCA_ACIAD</name>
<evidence type="ECO:0000250" key="1">
    <source>
        <dbReference type="UniProtKB" id="I6XD65"/>
    </source>
</evidence>
<evidence type="ECO:0000250" key="2">
    <source>
        <dbReference type="UniProtKB" id="P21369"/>
    </source>
</evidence>
<evidence type="ECO:0000269" key="3">
    <source>
    </source>
</evidence>
<evidence type="ECO:0000303" key="4">
    <source>
    </source>
</evidence>
<evidence type="ECO:0000305" key="5"/>
<evidence type="ECO:0000312" key="6">
    <source>
        <dbReference type="EMBL" id="CAG70224.1"/>
    </source>
</evidence>
<dbReference type="EC" id="3.5.1.19" evidence="3"/>
<dbReference type="EMBL" id="CR543861">
    <property type="protein sequence ID" value="CAG70224.1"/>
    <property type="molecule type" value="Genomic_DNA"/>
</dbReference>
<dbReference type="SMR" id="Q6F6U3"/>
<dbReference type="STRING" id="202950.GCA_001485005_01633"/>
<dbReference type="KEGG" id="aci:ACIAD3584"/>
<dbReference type="eggNOG" id="COG1335">
    <property type="taxonomic scope" value="Bacteria"/>
</dbReference>
<dbReference type="HOGENOM" id="CLU_068979_13_1_6"/>
<dbReference type="UniPathway" id="UPA00830">
    <property type="reaction ID" value="UER00790"/>
</dbReference>
<dbReference type="Proteomes" id="UP000000430">
    <property type="component" value="Chromosome"/>
</dbReference>
<dbReference type="GO" id="GO:0046872">
    <property type="term" value="F:metal ion binding"/>
    <property type="evidence" value="ECO:0007669"/>
    <property type="project" value="UniProtKB-KW"/>
</dbReference>
<dbReference type="GO" id="GO:0008936">
    <property type="term" value="F:nicotinamidase activity"/>
    <property type="evidence" value="ECO:0007669"/>
    <property type="project" value="UniProtKB-EC"/>
</dbReference>
<dbReference type="GO" id="GO:0019363">
    <property type="term" value="P:pyridine nucleotide biosynthetic process"/>
    <property type="evidence" value="ECO:0007669"/>
    <property type="project" value="UniProtKB-KW"/>
</dbReference>
<dbReference type="CDD" id="cd01011">
    <property type="entry name" value="nicotinamidase"/>
    <property type="match status" value="1"/>
</dbReference>
<dbReference type="FunFam" id="3.40.50.850:FF:000006">
    <property type="entry name" value="Bifunctional pyrazinamidase/nicotinamidase"/>
    <property type="match status" value="1"/>
</dbReference>
<dbReference type="Gene3D" id="3.40.50.850">
    <property type="entry name" value="Isochorismatase-like"/>
    <property type="match status" value="1"/>
</dbReference>
<dbReference type="InterPro" id="IPR000868">
    <property type="entry name" value="Isochorismatase-like_dom"/>
</dbReference>
<dbReference type="InterPro" id="IPR036380">
    <property type="entry name" value="Isochorismatase-like_sf"/>
</dbReference>
<dbReference type="InterPro" id="IPR052347">
    <property type="entry name" value="Isochorismatase_Nicotinamidase"/>
</dbReference>
<dbReference type="NCBIfam" id="NF008623">
    <property type="entry name" value="PRK11609.1"/>
    <property type="match status" value="1"/>
</dbReference>
<dbReference type="PANTHER" id="PTHR11080:SF2">
    <property type="entry name" value="LD05707P"/>
    <property type="match status" value="1"/>
</dbReference>
<dbReference type="PANTHER" id="PTHR11080">
    <property type="entry name" value="PYRAZINAMIDASE/NICOTINAMIDASE"/>
    <property type="match status" value="1"/>
</dbReference>
<dbReference type="Pfam" id="PF00857">
    <property type="entry name" value="Isochorismatase"/>
    <property type="match status" value="1"/>
</dbReference>
<dbReference type="SUPFAM" id="SSF52499">
    <property type="entry name" value="Isochorismatase-like hydrolases"/>
    <property type="match status" value="1"/>
</dbReference>